<keyword id="KW-0131">Cell cycle</keyword>
<keyword id="KW-0132">Cell division</keyword>
<keyword id="KW-0998">Cell outer membrane</keyword>
<keyword id="KW-0449">Lipoprotein</keyword>
<keyword id="KW-0472">Membrane</keyword>
<keyword id="KW-0564">Palmitate</keyword>
<keyword id="KW-1185">Reference proteome</keyword>
<keyword id="KW-0732">Signal</keyword>
<gene>
    <name evidence="1" type="primary">pal</name>
    <name type="synonym">omp16</name>
    <name type="synonym">palA</name>
    <name type="ordered locus">Atu3713</name>
    <name type="ORF">AGR_L_2246</name>
</gene>
<protein>
    <recommendedName>
        <fullName evidence="1">Peptidoglycan-associated lipoprotein</fullName>
        <shortName evidence="1">PAL</shortName>
    </recommendedName>
    <alternativeName>
        <fullName>Outer membrane lipoprotein Omp16 homolog</fullName>
    </alternativeName>
</protein>
<sequence>MSRTNISALSPMQKLARNPAVIAMTLALALAGCANKKNMPNSAGELGLGGAGSATPGSQQDFTVNVGDRIFFDTDSTSIRADAQQTLQRQAQWLSRYPNYAITVEGHADERGTREYNLALGARRAAATRDFLASQGVPASRMKTISYGKEKPVAVCDDISCWSQNRRAVTVLGGAGM</sequence>
<comment type="function">
    <text evidence="1">Part of the Tol-Pal system, which plays a role in outer membrane invagination during cell division and is important for maintaining outer membrane integrity.</text>
</comment>
<comment type="subunit">
    <text evidence="1">The Tol-Pal system is composed of five core proteins: the inner membrane proteins TolA, TolQ and TolR, the periplasmic protein TolB and the outer membrane protein Pal. They form a network linking the inner and outer membranes and the peptidoglycan layer.</text>
</comment>
<comment type="subcellular location">
    <subcellularLocation>
        <location evidence="1">Cell outer membrane</location>
        <topology evidence="1">Lipid-anchor</topology>
    </subcellularLocation>
</comment>
<comment type="similarity">
    <text evidence="1">Belongs to the Pal lipoprotein family.</text>
</comment>
<accession>Q8U9L5</accession>
<dbReference type="EMBL" id="AE007870">
    <property type="protein sequence ID" value="AAK89692.1"/>
    <property type="molecule type" value="Genomic_DNA"/>
</dbReference>
<dbReference type="PIR" id="AE3013">
    <property type="entry name" value="AE3013"/>
</dbReference>
<dbReference type="PIR" id="B98271">
    <property type="entry name" value="B98271"/>
</dbReference>
<dbReference type="RefSeq" id="NP_356907.1">
    <property type="nucleotide sequence ID" value="NC_003063.2"/>
</dbReference>
<dbReference type="RefSeq" id="WP_006310278.1">
    <property type="nucleotide sequence ID" value="NC_003063.2"/>
</dbReference>
<dbReference type="SMR" id="Q8U9L5"/>
<dbReference type="STRING" id="176299.Atu3713"/>
<dbReference type="EnsemblBacteria" id="AAK89692">
    <property type="protein sequence ID" value="AAK89692"/>
    <property type="gene ID" value="Atu3713"/>
</dbReference>
<dbReference type="GeneID" id="1135587"/>
<dbReference type="KEGG" id="atu:Atu3713"/>
<dbReference type="PATRIC" id="fig|176299.10.peg.3545"/>
<dbReference type="eggNOG" id="COG2885">
    <property type="taxonomic scope" value="Bacteria"/>
</dbReference>
<dbReference type="HOGENOM" id="CLU_016890_9_2_5"/>
<dbReference type="OrthoDB" id="9809164at2"/>
<dbReference type="PhylomeDB" id="Q8U9L5"/>
<dbReference type="BioCyc" id="AGRO:ATU3713-MONOMER"/>
<dbReference type="Proteomes" id="UP000000813">
    <property type="component" value="Chromosome linear"/>
</dbReference>
<dbReference type="GO" id="GO:0009279">
    <property type="term" value="C:cell outer membrane"/>
    <property type="evidence" value="ECO:0007669"/>
    <property type="project" value="UniProtKB-SubCell"/>
</dbReference>
<dbReference type="GO" id="GO:0051301">
    <property type="term" value="P:cell division"/>
    <property type="evidence" value="ECO:0007669"/>
    <property type="project" value="UniProtKB-UniRule"/>
</dbReference>
<dbReference type="CDD" id="cd07185">
    <property type="entry name" value="OmpA_C-like"/>
    <property type="match status" value="1"/>
</dbReference>
<dbReference type="Gene3D" id="3.30.1330.60">
    <property type="entry name" value="OmpA-like domain"/>
    <property type="match status" value="1"/>
</dbReference>
<dbReference type="HAMAP" id="MF_02204">
    <property type="entry name" value="Pal"/>
    <property type="match status" value="1"/>
</dbReference>
<dbReference type="InterPro" id="IPR050330">
    <property type="entry name" value="Bact_OuterMem_StrucFunc"/>
</dbReference>
<dbReference type="InterPro" id="IPR006664">
    <property type="entry name" value="OMP_bac"/>
</dbReference>
<dbReference type="InterPro" id="IPR006665">
    <property type="entry name" value="OmpA-like"/>
</dbReference>
<dbReference type="InterPro" id="IPR006690">
    <property type="entry name" value="OMPA-like_CS"/>
</dbReference>
<dbReference type="InterPro" id="IPR036737">
    <property type="entry name" value="OmpA-like_sf"/>
</dbReference>
<dbReference type="InterPro" id="IPR039001">
    <property type="entry name" value="Pal"/>
</dbReference>
<dbReference type="InterPro" id="IPR014169">
    <property type="entry name" value="Pal_lipo_C"/>
</dbReference>
<dbReference type="NCBIfam" id="TIGR02802">
    <property type="entry name" value="Pal_lipo"/>
    <property type="match status" value="1"/>
</dbReference>
<dbReference type="PANTHER" id="PTHR30329:SF21">
    <property type="entry name" value="LIPOPROTEIN YIAD-RELATED"/>
    <property type="match status" value="1"/>
</dbReference>
<dbReference type="PANTHER" id="PTHR30329">
    <property type="entry name" value="STATOR ELEMENT OF FLAGELLAR MOTOR COMPLEX"/>
    <property type="match status" value="1"/>
</dbReference>
<dbReference type="Pfam" id="PF00691">
    <property type="entry name" value="OmpA"/>
    <property type="match status" value="1"/>
</dbReference>
<dbReference type="PRINTS" id="PR01021">
    <property type="entry name" value="OMPADOMAIN"/>
</dbReference>
<dbReference type="SUPFAM" id="SSF103088">
    <property type="entry name" value="OmpA-like"/>
    <property type="match status" value="1"/>
</dbReference>
<dbReference type="PROSITE" id="PS01068">
    <property type="entry name" value="OMPA_1"/>
    <property type="match status" value="1"/>
</dbReference>
<dbReference type="PROSITE" id="PS51123">
    <property type="entry name" value="OMPA_2"/>
    <property type="match status" value="1"/>
</dbReference>
<dbReference type="PROSITE" id="PS51257">
    <property type="entry name" value="PROKAR_LIPOPROTEIN"/>
    <property type="match status" value="1"/>
</dbReference>
<organism>
    <name type="scientific">Agrobacterium fabrum (strain C58 / ATCC 33970)</name>
    <name type="common">Agrobacterium tumefaciens (strain C58)</name>
    <dbReference type="NCBI Taxonomy" id="176299"/>
    <lineage>
        <taxon>Bacteria</taxon>
        <taxon>Pseudomonadati</taxon>
        <taxon>Pseudomonadota</taxon>
        <taxon>Alphaproteobacteria</taxon>
        <taxon>Hyphomicrobiales</taxon>
        <taxon>Rhizobiaceae</taxon>
        <taxon>Rhizobium/Agrobacterium group</taxon>
        <taxon>Agrobacterium</taxon>
        <taxon>Agrobacterium tumefaciens complex</taxon>
    </lineage>
</organism>
<name>PAL_AGRFC</name>
<feature type="signal peptide" evidence="1">
    <location>
        <begin position="1"/>
        <end position="32"/>
    </location>
</feature>
<feature type="chain" id="PRO_0000020131" description="Peptidoglycan-associated lipoprotein" evidence="1">
    <location>
        <begin position="33"/>
        <end position="177"/>
    </location>
</feature>
<feature type="domain" description="OmpA-like" evidence="1">
    <location>
        <begin position="59"/>
        <end position="176"/>
    </location>
</feature>
<feature type="lipid moiety-binding region" description="N-palmitoyl cysteine" evidence="1">
    <location>
        <position position="33"/>
    </location>
</feature>
<feature type="lipid moiety-binding region" description="S-diacylglycerol cysteine" evidence="1">
    <location>
        <position position="33"/>
    </location>
</feature>
<evidence type="ECO:0000255" key="1">
    <source>
        <dbReference type="HAMAP-Rule" id="MF_02204"/>
    </source>
</evidence>
<reference key="1">
    <citation type="journal article" date="2001" name="Science">
        <title>The genome of the natural genetic engineer Agrobacterium tumefaciens C58.</title>
        <authorList>
            <person name="Wood D.W."/>
            <person name="Setubal J.C."/>
            <person name="Kaul R."/>
            <person name="Monks D.E."/>
            <person name="Kitajima J.P."/>
            <person name="Okura V.K."/>
            <person name="Zhou Y."/>
            <person name="Chen L."/>
            <person name="Wood G.E."/>
            <person name="Almeida N.F. Jr."/>
            <person name="Woo L."/>
            <person name="Chen Y."/>
            <person name="Paulsen I.T."/>
            <person name="Eisen J.A."/>
            <person name="Karp P.D."/>
            <person name="Bovee D. Sr."/>
            <person name="Chapman P."/>
            <person name="Clendenning J."/>
            <person name="Deatherage G."/>
            <person name="Gillet W."/>
            <person name="Grant C."/>
            <person name="Kutyavin T."/>
            <person name="Levy R."/>
            <person name="Li M.-J."/>
            <person name="McClelland E."/>
            <person name="Palmieri A."/>
            <person name="Raymond C."/>
            <person name="Rouse G."/>
            <person name="Saenphimmachak C."/>
            <person name="Wu Z."/>
            <person name="Romero P."/>
            <person name="Gordon D."/>
            <person name="Zhang S."/>
            <person name="Yoo H."/>
            <person name="Tao Y."/>
            <person name="Biddle P."/>
            <person name="Jung M."/>
            <person name="Krespan W."/>
            <person name="Perry M."/>
            <person name="Gordon-Kamm B."/>
            <person name="Liao L."/>
            <person name="Kim S."/>
            <person name="Hendrick C."/>
            <person name="Zhao Z.-Y."/>
            <person name="Dolan M."/>
            <person name="Chumley F."/>
            <person name="Tingey S.V."/>
            <person name="Tomb J.-F."/>
            <person name="Gordon M.P."/>
            <person name="Olson M.V."/>
            <person name="Nester E.W."/>
        </authorList>
    </citation>
    <scope>NUCLEOTIDE SEQUENCE [LARGE SCALE GENOMIC DNA]</scope>
    <source>
        <strain>C58 / ATCC 33970</strain>
    </source>
</reference>
<reference key="2">
    <citation type="journal article" date="2001" name="Science">
        <title>Genome sequence of the plant pathogen and biotechnology agent Agrobacterium tumefaciens C58.</title>
        <authorList>
            <person name="Goodner B."/>
            <person name="Hinkle G."/>
            <person name="Gattung S."/>
            <person name="Miller N."/>
            <person name="Blanchard M."/>
            <person name="Qurollo B."/>
            <person name="Goldman B.S."/>
            <person name="Cao Y."/>
            <person name="Askenazi M."/>
            <person name="Halling C."/>
            <person name="Mullin L."/>
            <person name="Houmiel K."/>
            <person name="Gordon J."/>
            <person name="Vaudin M."/>
            <person name="Iartchouk O."/>
            <person name="Epp A."/>
            <person name="Liu F."/>
            <person name="Wollam C."/>
            <person name="Allinger M."/>
            <person name="Doughty D."/>
            <person name="Scott C."/>
            <person name="Lappas C."/>
            <person name="Markelz B."/>
            <person name="Flanagan C."/>
            <person name="Crowell C."/>
            <person name="Gurson J."/>
            <person name="Lomo C."/>
            <person name="Sear C."/>
            <person name="Strub G."/>
            <person name="Cielo C."/>
            <person name="Slater S."/>
        </authorList>
    </citation>
    <scope>NUCLEOTIDE SEQUENCE [LARGE SCALE GENOMIC DNA]</scope>
    <source>
        <strain>C58 / ATCC 33970</strain>
    </source>
</reference>
<proteinExistence type="inferred from homology"/>